<reference key="1">
    <citation type="journal article" date="1994" name="Bioorg. Khim.">
        <title>Primary structure of polyhedrin from the nuclear polyhedrosis virus of the silkworm Malacosoma neustria.</title>
        <authorList>
            <person name="Kozlov E.A."/>
            <person name="Rodnin N.V."/>
            <person name="Pal'Chikovskaia L.I."/>
            <person name="Levitina T.L."/>
            <person name="Bobrovskaia M.T."/>
            <person name="Radomskii N.F."/>
        </authorList>
    </citation>
    <scope>PROTEIN SEQUENCE</scope>
</reference>
<reference key="2">
    <citation type="submission" date="1990-09" db="EMBL/GenBank/DDBJ databases">
        <authorList>
            <person name="Vladimir V."/>
            <person name="Kavsan V.M."/>
        </authorList>
    </citation>
    <scope>NUCLEOTIDE SEQUENCE [GENOMIC DNA]</scope>
</reference>
<organismHost>
    <name type="scientific">Lepidoptera</name>
    <name type="common">butterflies and moths</name>
    <dbReference type="NCBI Taxonomy" id="7088"/>
</organismHost>
<proteinExistence type="evidence at protein level"/>
<comment type="function">
    <text>Major component of the virus occlusion bodies, which are large proteinaceous structures (polyhedra), that protect the virus from the outside environment for extended periods until they are ingested by insect larvae.</text>
</comment>
<comment type="similarity">
    <text evidence="1">Belongs to the polyhedrin family.</text>
</comment>
<accession>Q25469</accession>
<keyword id="KW-0903">Direct protein sequencing</keyword>
<keyword id="KW-0842">Viral occlusion body</keyword>
<organism>
    <name type="scientific">Malacosoma neustria nuclear polyhedrosis virus</name>
    <name type="common">MnNPV</name>
    <dbReference type="NCBI Taxonomy" id="38012"/>
    <lineage>
        <taxon>Viruses</taxon>
        <taxon>Viruses incertae sedis</taxon>
        <taxon>Naldaviricetes</taxon>
        <taxon>Lefavirales</taxon>
        <taxon>Baculoviridae</taxon>
        <taxon>Alphabaculovirus</taxon>
    </lineage>
</organism>
<dbReference type="EMBL" id="X55658">
    <property type="protein sequence ID" value="CAA39191.1"/>
    <property type="molecule type" value="Genomic_DNA"/>
</dbReference>
<dbReference type="PIR" id="S21507">
    <property type="entry name" value="S21507"/>
</dbReference>
<dbReference type="SMR" id="Q25469"/>
<dbReference type="GO" id="GO:0039679">
    <property type="term" value="C:viral occlusion body"/>
    <property type="evidence" value="ECO:0007669"/>
    <property type="project" value="UniProtKB-KW"/>
</dbReference>
<dbReference type="GO" id="GO:0005198">
    <property type="term" value="F:structural molecule activity"/>
    <property type="evidence" value="ECO:0007669"/>
    <property type="project" value="InterPro"/>
</dbReference>
<dbReference type="InterPro" id="IPR001746">
    <property type="entry name" value="Polyhedrin"/>
</dbReference>
<dbReference type="Pfam" id="PF00738">
    <property type="entry name" value="Polyhedrin"/>
    <property type="match status" value="1"/>
</dbReference>
<sequence>MYTRYSYNPTLGRTYVYDNKYYKNLGHVIKNAKRKKNAAEHELEERNLDPLDKYLVAEDPFLGPGKNQKLTLFKEIRNVKPDTMKLIVNWSGKEFLRETWTRFMEDSFPIVNDQEIMDVFLVVNMRPTKPNRCSVLAQHALRCDSDYVPHEVIRIVKPSYVGSNNEYRISLGKRYNGCPVMNLHSEYTNSFEDFINRVIWENFYKPLVYIGTDSAEEEEILLEVSLVFKIKEFAPDAPLYTGPAY</sequence>
<name>PYHD_NPVMN</name>
<protein>
    <recommendedName>
        <fullName>Polyhedrin</fullName>
    </recommendedName>
    <alternativeName>
        <fullName>Major occlusion protein</fullName>
    </alternativeName>
</protein>
<evidence type="ECO:0000305" key="1"/>
<feature type="chain" id="PRO_0000217253" description="Polyhedrin">
    <location>
        <begin position="1"/>
        <end position="245"/>
    </location>
</feature>
<feature type="sequence conflict" description="In Ref. 1; AA sequence." evidence="1" ref="1">
    <original>I</original>
    <variation>V</variation>
    <location>
        <position position="116"/>
    </location>
</feature>
<feature type="sequence conflict" description="In Ref. 1; AA sequence." evidence="1" ref="1">
    <original>FLVVNM</original>
    <variation>LLVLQI</variation>
    <location>
        <begin position="120"/>
        <end position="125"/>
    </location>
</feature>
<feature type="sequence conflict" description="In Ref. 1; AA sequence." evidence="1" ref="1">
    <original>SV</original>
    <variation>FRF</variation>
    <location>
        <begin position="134"/>
        <end position="135"/>
    </location>
</feature>
<feature type="sequence conflict" description="In Ref. 1; AA sequence." evidence="1" ref="1">
    <original>K</original>
    <variation>E</variation>
    <location>
        <position position="157"/>
    </location>
</feature>
<feature type="sequence conflict" description="In Ref. 1; AA sequence." evidence="1" ref="1">
    <original>YNG</original>
    <variation>GYA</variation>
    <location>
        <begin position="175"/>
        <end position="177"/>
    </location>
</feature>
<feature type="sequence conflict" description="In Ref. 1; AA sequence." evidence="1" ref="1">
    <original>V</original>
    <variation>L</variation>
    <location>
        <position position="208"/>
    </location>
</feature>